<name>GCSPA_CAUVC</name>
<organism>
    <name type="scientific">Caulobacter vibrioides (strain ATCC 19089 / CIP 103742 / CB 15)</name>
    <name type="common">Caulobacter crescentus</name>
    <dbReference type="NCBI Taxonomy" id="190650"/>
    <lineage>
        <taxon>Bacteria</taxon>
        <taxon>Pseudomonadati</taxon>
        <taxon>Pseudomonadota</taxon>
        <taxon>Alphaproteobacteria</taxon>
        <taxon>Caulobacterales</taxon>
        <taxon>Caulobacteraceae</taxon>
        <taxon>Caulobacter</taxon>
    </lineage>
</organism>
<evidence type="ECO:0000255" key="1">
    <source>
        <dbReference type="HAMAP-Rule" id="MF_00712"/>
    </source>
</evidence>
<protein>
    <recommendedName>
        <fullName evidence="1">Probable glycine dehydrogenase (decarboxylating) subunit 1</fullName>
        <ecNumber evidence="1">1.4.4.2</ecNumber>
    </recommendedName>
    <alternativeName>
        <fullName evidence="1">Glycine cleavage system P-protein subunit 1</fullName>
    </alternativeName>
    <alternativeName>
        <fullName evidence="1">Glycine decarboxylase subunit 1</fullName>
    </alternativeName>
    <alternativeName>
        <fullName evidence="1">Glycine dehydrogenase (aminomethyl-transferring) subunit 1</fullName>
    </alternativeName>
</protein>
<comment type="function">
    <text evidence="1">The glycine cleavage system catalyzes the degradation of glycine. The P protein binds the alpha-amino group of glycine through its pyridoxal phosphate cofactor; CO(2) is released and the remaining methylamine moiety is then transferred to the lipoamide cofactor of the H protein.</text>
</comment>
<comment type="catalytic activity">
    <reaction evidence="1">
        <text>N(6)-[(R)-lipoyl]-L-lysyl-[glycine-cleavage complex H protein] + glycine + H(+) = N(6)-[(R)-S(8)-aminomethyldihydrolipoyl]-L-lysyl-[glycine-cleavage complex H protein] + CO2</text>
        <dbReference type="Rhea" id="RHEA:24304"/>
        <dbReference type="Rhea" id="RHEA-COMP:10494"/>
        <dbReference type="Rhea" id="RHEA-COMP:10495"/>
        <dbReference type="ChEBI" id="CHEBI:15378"/>
        <dbReference type="ChEBI" id="CHEBI:16526"/>
        <dbReference type="ChEBI" id="CHEBI:57305"/>
        <dbReference type="ChEBI" id="CHEBI:83099"/>
        <dbReference type="ChEBI" id="CHEBI:83143"/>
        <dbReference type="EC" id="1.4.4.2"/>
    </reaction>
</comment>
<comment type="subunit">
    <text evidence="1">The glycine cleavage system is composed of four proteins: P, T, L and H. In this organism, the P 'protein' is a heterodimer of two subunits.</text>
</comment>
<comment type="similarity">
    <text evidence="1">Belongs to the GcvP family. N-terminal subunit subfamily.</text>
</comment>
<proteinExistence type="inferred from homology"/>
<reference key="1">
    <citation type="journal article" date="2001" name="Proc. Natl. Acad. Sci. U.S.A.">
        <title>Complete genome sequence of Caulobacter crescentus.</title>
        <authorList>
            <person name="Nierman W.C."/>
            <person name="Feldblyum T.V."/>
            <person name="Laub M.T."/>
            <person name="Paulsen I.T."/>
            <person name="Nelson K.E."/>
            <person name="Eisen J.A."/>
            <person name="Heidelberg J.F."/>
            <person name="Alley M.R.K."/>
            <person name="Ohta N."/>
            <person name="Maddock J.R."/>
            <person name="Potocka I."/>
            <person name="Nelson W.C."/>
            <person name="Newton A."/>
            <person name="Stephens C."/>
            <person name="Phadke N.D."/>
            <person name="Ely B."/>
            <person name="DeBoy R.T."/>
            <person name="Dodson R.J."/>
            <person name="Durkin A.S."/>
            <person name="Gwinn M.L."/>
            <person name="Haft D.H."/>
            <person name="Kolonay J.F."/>
            <person name="Smit J."/>
            <person name="Craven M.B."/>
            <person name="Khouri H.M."/>
            <person name="Shetty J."/>
            <person name="Berry K.J."/>
            <person name="Utterback T.R."/>
            <person name="Tran K."/>
            <person name="Wolf A.M."/>
            <person name="Vamathevan J.J."/>
            <person name="Ermolaeva M.D."/>
            <person name="White O."/>
            <person name="Salzberg S.L."/>
            <person name="Venter J.C."/>
            <person name="Shapiro L."/>
            <person name="Fraser C.M."/>
        </authorList>
    </citation>
    <scope>NUCLEOTIDE SEQUENCE [LARGE SCALE GENOMIC DNA]</scope>
    <source>
        <strain>ATCC 19089 / CIP 103742 / CB 15</strain>
    </source>
</reference>
<sequence>MRYLPLTPEDRVEMLGAIGVKSIDDLFVDVPVSARRDAPVDLPHHAGELDVEREMAGLARRNRAAGEGPFFCGAGAYRHHVPATVDHIIQRSEFLTSYTPYQPEIAQGTLQVLFEFQTQVAALTGMEVANASLYDGSTGAAEAVMMAQRVTRRNKAVMSGGVHPHYVGAIETLAHAAGVATQALPAAVDAEDAVIAAIDQDTACVVVQTPNVFGTVTDVSKIAEAAHAAGALLIVVTTEAVSFGLLKSPGEMGADIAVAEGQSIGNGLNFGGPYVGLFACKEKFVRQMPGRLCGETVDADGKRGFVLTLSTREQHIRRDKATSNICTNSGLCALAFSIHMSLLGETGLRQLAAVNHQKALALRDALKAVPGVEILTPRFFNEFAIRVPGKAAEVVEILAAHGVIAGVPFSRLDAKAGLDDVLLVAATETTLDIDIPVFAKALTKVFAQ</sequence>
<gene>
    <name evidence="1" type="primary">gcvPA</name>
    <name type="ordered locus">CC_3353</name>
</gene>
<dbReference type="EC" id="1.4.4.2" evidence="1"/>
<dbReference type="EMBL" id="AE005673">
    <property type="protein sequence ID" value="AAK25315.1"/>
    <property type="molecule type" value="Genomic_DNA"/>
</dbReference>
<dbReference type="PIR" id="G87664">
    <property type="entry name" value="G87664"/>
</dbReference>
<dbReference type="RefSeq" id="NP_422147.1">
    <property type="nucleotide sequence ID" value="NC_002696.2"/>
</dbReference>
<dbReference type="RefSeq" id="WP_010921182.1">
    <property type="nucleotide sequence ID" value="NC_002696.2"/>
</dbReference>
<dbReference type="SMR" id="Q9A353"/>
<dbReference type="STRING" id="190650.CC_3353"/>
<dbReference type="EnsemblBacteria" id="AAK25315">
    <property type="protein sequence ID" value="AAK25315"/>
    <property type="gene ID" value="CC_3353"/>
</dbReference>
<dbReference type="KEGG" id="ccr:CC_3353"/>
<dbReference type="PATRIC" id="fig|190650.5.peg.3359"/>
<dbReference type="eggNOG" id="COG0403">
    <property type="taxonomic scope" value="Bacteria"/>
</dbReference>
<dbReference type="HOGENOM" id="CLU_004620_0_2_5"/>
<dbReference type="BioCyc" id="CAULO:CC3353-MONOMER"/>
<dbReference type="Proteomes" id="UP000001816">
    <property type="component" value="Chromosome"/>
</dbReference>
<dbReference type="GO" id="GO:0004375">
    <property type="term" value="F:glycine dehydrogenase (decarboxylating) activity"/>
    <property type="evidence" value="ECO:0007669"/>
    <property type="project" value="UniProtKB-EC"/>
</dbReference>
<dbReference type="GO" id="GO:0019464">
    <property type="term" value="P:glycine decarboxylation via glycine cleavage system"/>
    <property type="evidence" value="ECO:0007669"/>
    <property type="project" value="UniProtKB-UniRule"/>
</dbReference>
<dbReference type="GO" id="GO:0009116">
    <property type="term" value="P:nucleoside metabolic process"/>
    <property type="evidence" value="ECO:0007669"/>
    <property type="project" value="InterPro"/>
</dbReference>
<dbReference type="Gene3D" id="3.90.1150.10">
    <property type="entry name" value="Aspartate Aminotransferase, domain 1"/>
    <property type="match status" value="1"/>
</dbReference>
<dbReference type="Gene3D" id="3.40.640.10">
    <property type="entry name" value="Type I PLP-dependent aspartate aminotransferase-like (Major domain)"/>
    <property type="match status" value="1"/>
</dbReference>
<dbReference type="HAMAP" id="MF_00712">
    <property type="entry name" value="GcvPA"/>
    <property type="match status" value="1"/>
</dbReference>
<dbReference type="InterPro" id="IPR023010">
    <property type="entry name" value="GcvPA"/>
</dbReference>
<dbReference type="InterPro" id="IPR049315">
    <property type="entry name" value="GDC-P_N"/>
</dbReference>
<dbReference type="InterPro" id="IPR015424">
    <property type="entry name" value="PyrdxlP-dep_Trfase"/>
</dbReference>
<dbReference type="InterPro" id="IPR015421">
    <property type="entry name" value="PyrdxlP-dep_Trfase_major"/>
</dbReference>
<dbReference type="InterPro" id="IPR015422">
    <property type="entry name" value="PyrdxlP-dep_Trfase_small"/>
</dbReference>
<dbReference type="NCBIfam" id="NF001696">
    <property type="entry name" value="PRK00451.1"/>
    <property type="match status" value="1"/>
</dbReference>
<dbReference type="PANTHER" id="PTHR42806">
    <property type="entry name" value="GLYCINE CLEAVAGE SYSTEM P-PROTEIN"/>
    <property type="match status" value="1"/>
</dbReference>
<dbReference type="PANTHER" id="PTHR42806:SF1">
    <property type="entry name" value="GLYCINE DEHYDROGENASE (DECARBOXYLATING)"/>
    <property type="match status" value="1"/>
</dbReference>
<dbReference type="Pfam" id="PF02347">
    <property type="entry name" value="GDC-P"/>
    <property type="match status" value="1"/>
</dbReference>
<dbReference type="PIRSF" id="PIRSF006815">
    <property type="entry name" value="GcvPA"/>
    <property type="match status" value="1"/>
</dbReference>
<dbReference type="SUPFAM" id="SSF53383">
    <property type="entry name" value="PLP-dependent transferases"/>
    <property type="match status" value="1"/>
</dbReference>
<accession>Q9A353</accession>
<keyword id="KW-0560">Oxidoreductase</keyword>
<keyword id="KW-1185">Reference proteome</keyword>
<feature type="chain" id="PRO_0000166962" description="Probable glycine dehydrogenase (decarboxylating) subunit 1">
    <location>
        <begin position="1"/>
        <end position="448"/>
    </location>
</feature>